<dbReference type="EMBL" id="AB026154">
    <property type="protein sequence ID" value="BAA82442.1"/>
    <property type="molecule type" value="mRNA"/>
</dbReference>
<dbReference type="EMBL" id="CH473951">
    <property type="protein sequence ID" value="EDM02373.1"/>
    <property type="molecule type" value="Genomic_DNA"/>
</dbReference>
<dbReference type="EMBL" id="BC128737">
    <property type="protein sequence ID" value="AAI28738.1"/>
    <property type="molecule type" value="mRNA"/>
</dbReference>
<dbReference type="RefSeq" id="NP_001398904.1">
    <molecule id="D3ZE55-1"/>
    <property type="nucleotide sequence ID" value="NM_001411975.1"/>
</dbReference>
<dbReference type="RefSeq" id="NP_074059.2">
    <molecule id="D3ZE55-2"/>
    <property type="nucleotide sequence ID" value="NM_022868.2"/>
</dbReference>
<dbReference type="RefSeq" id="XP_008769119.1">
    <property type="nucleotide sequence ID" value="XM_008770897.2"/>
</dbReference>
<dbReference type="SMR" id="D3ZE55"/>
<dbReference type="FunCoup" id="D3ZE55">
    <property type="interactions" value="1650"/>
</dbReference>
<dbReference type="STRING" id="10116.ENSRNOP00000017599"/>
<dbReference type="GlyCosmos" id="D3ZE55">
    <property type="glycosylation" value="2 sites, 4 glycans"/>
</dbReference>
<dbReference type="GlyGen" id="D3ZE55">
    <property type="glycosylation" value="2 sites, 4 N-linked glycans (1 site)"/>
</dbReference>
<dbReference type="iPTMnet" id="D3ZE55"/>
<dbReference type="PhosphoSitePlus" id="D3ZE55"/>
<dbReference type="SwissPalm" id="D3ZE55"/>
<dbReference type="PaxDb" id="10116-ENSRNOP00000017599"/>
<dbReference type="Ensembl" id="ENSRNOT00000017599.4">
    <molecule id="D3ZE55-1"/>
    <property type="protein sequence ID" value="ENSRNOP00000017599.3"/>
    <property type="gene ID" value="ENSRNOG00000013101.4"/>
</dbReference>
<dbReference type="GeneID" id="64865"/>
<dbReference type="KEGG" id="rno:64865"/>
<dbReference type="AGR" id="RGD:69350"/>
<dbReference type="CTD" id="5100"/>
<dbReference type="RGD" id="69350">
    <property type="gene designation" value="Pcdh8"/>
</dbReference>
<dbReference type="eggNOG" id="KOG3594">
    <property type="taxonomic scope" value="Eukaryota"/>
</dbReference>
<dbReference type="GeneTree" id="ENSGT00940000155219"/>
<dbReference type="HOGENOM" id="CLU_006480_1_2_1"/>
<dbReference type="InParanoid" id="D3ZE55"/>
<dbReference type="OMA" id="SCHFEGQ"/>
<dbReference type="PhylomeDB" id="D3ZE55"/>
<dbReference type="PRO" id="PR:D3ZE55"/>
<dbReference type="Proteomes" id="UP000002494">
    <property type="component" value="Chromosome 15"/>
</dbReference>
<dbReference type="Proteomes" id="UP000234681">
    <property type="component" value="Chromosome 15"/>
</dbReference>
<dbReference type="Bgee" id="ENSRNOG00000013101">
    <property type="expression patterns" value="Expressed in frontal cortex and 2 other cell types or tissues"/>
</dbReference>
<dbReference type="GO" id="GO:0030425">
    <property type="term" value="C:dendrite"/>
    <property type="evidence" value="ECO:0007669"/>
    <property type="project" value="UniProtKB-SubCell"/>
</dbReference>
<dbReference type="GO" id="GO:0098978">
    <property type="term" value="C:glutamatergic synapse"/>
    <property type="evidence" value="ECO:0000314"/>
    <property type="project" value="SynGO"/>
</dbReference>
<dbReference type="GO" id="GO:0005886">
    <property type="term" value="C:plasma membrane"/>
    <property type="evidence" value="ECO:0000318"/>
    <property type="project" value="GO_Central"/>
</dbReference>
<dbReference type="GO" id="GO:0045211">
    <property type="term" value="C:postsynaptic membrane"/>
    <property type="evidence" value="ECO:0000314"/>
    <property type="project" value="SynGO"/>
</dbReference>
<dbReference type="GO" id="GO:0042734">
    <property type="term" value="C:presynaptic membrane"/>
    <property type="evidence" value="ECO:0007669"/>
    <property type="project" value="UniProtKB-SubCell"/>
</dbReference>
<dbReference type="GO" id="GO:0098685">
    <property type="term" value="C:Schaffer collateral - CA1 synapse"/>
    <property type="evidence" value="ECO:0000314"/>
    <property type="project" value="SynGO"/>
</dbReference>
<dbReference type="GO" id="GO:0045202">
    <property type="term" value="C:synapse"/>
    <property type="evidence" value="ECO:0000314"/>
    <property type="project" value="SynGO"/>
</dbReference>
<dbReference type="GO" id="GO:0005509">
    <property type="term" value="F:calcium ion binding"/>
    <property type="evidence" value="ECO:0007669"/>
    <property type="project" value="InterPro"/>
</dbReference>
<dbReference type="GO" id="GO:0007155">
    <property type="term" value="P:cell adhesion"/>
    <property type="evidence" value="ECO:0000318"/>
    <property type="project" value="GO_Central"/>
</dbReference>
<dbReference type="GO" id="GO:0007268">
    <property type="term" value="P:chemical synaptic transmission"/>
    <property type="evidence" value="ECO:0000314"/>
    <property type="project" value="RGD"/>
</dbReference>
<dbReference type="GO" id="GO:0007156">
    <property type="term" value="P:homophilic cell adhesion via plasma membrane adhesion molecules"/>
    <property type="evidence" value="ECO:0007669"/>
    <property type="project" value="InterPro"/>
</dbReference>
<dbReference type="GO" id="GO:0007616">
    <property type="term" value="P:long-term memory"/>
    <property type="evidence" value="ECO:0000304"/>
    <property type="project" value="RGD"/>
</dbReference>
<dbReference type="GO" id="GO:0050804">
    <property type="term" value="P:modulation of chemical synaptic transmission"/>
    <property type="evidence" value="ECO:0000314"/>
    <property type="project" value="SynGO"/>
</dbReference>
<dbReference type="GO" id="GO:0016331">
    <property type="term" value="P:morphogenesis of embryonic epithelium"/>
    <property type="evidence" value="ECO:0000266"/>
    <property type="project" value="RGD"/>
</dbReference>
<dbReference type="GO" id="GO:0099179">
    <property type="term" value="P:regulation of synaptic membrane adhesion"/>
    <property type="evidence" value="ECO:0000314"/>
    <property type="project" value="SynGO"/>
</dbReference>
<dbReference type="GO" id="GO:0001756">
    <property type="term" value="P:somitogenesis"/>
    <property type="evidence" value="ECO:0000266"/>
    <property type="project" value="RGD"/>
</dbReference>
<dbReference type="CDD" id="cd11304">
    <property type="entry name" value="Cadherin_repeat"/>
    <property type="match status" value="6"/>
</dbReference>
<dbReference type="FunFam" id="2.60.40.60:FF:000120">
    <property type="entry name" value="Protocadherin 8"/>
    <property type="match status" value="1"/>
</dbReference>
<dbReference type="FunFam" id="2.60.40.60:FF:000001">
    <property type="entry name" value="Protocadherin alpha 2"/>
    <property type="match status" value="1"/>
</dbReference>
<dbReference type="FunFam" id="2.60.40.60:FF:000002">
    <property type="entry name" value="Protocadherin alpha 2"/>
    <property type="match status" value="1"/>
</dbReference>
<dbReference type="FunFam" id="2.60.40.60:FF:000003">
    <property type="entry name" value="Protocadherin alpha 2"/>
    <property type="match status" value="1"/>
</dbReference>
<dbReference type="FunFam" id="2.60.40.60:FF:000007">
    <property type="entry name" value="Protocadherin alpha 2"/>
    <property type="match status" value="1"/>
</dbReference>
<dbReference type="FunFam" id="2.60.40.60:FF:000117">
    <property type="entry name" value="protocadherin-8 isoform X1"/>
    <property type="match status" value="1"/>
</dbReference>
<dbReference type="Gene3D" id="2.60.40.60">
    <property type="entry name" value="Cadherins"/>
    <property type="match status" value="6"/>
</dbReference>
<dbReference type="InterPro" id="IPR002126">
    <property type="entry name" value="Cadherin-like_dom"/>
</dbReference>
<dbReference type="InterPro" id="IPR015919">
    <property type="entry name" value="Cadherin-like_sf"/>
</dbReference>
<dbReference type="InterPro" id="IPR020894">
    <property type="entry name" value="Cadherin_CS"/>
</dbReference>
<dbReference type="InterPro" id="IPR013164">
    <property type="entry name" value="Cadherin_N"/>
</dbReference>
<dbReference type="InterPro" id="IPR050174">
    <property type="entry name" value="Protocadherin/Cadherin-CA"/>
</dbReference>
<dbReference type="PANTHER" id="PTHR24028">
    <property type="entry name" value="CADHERIN-87A"/>
    <property type="match status" value="1"/>
</dbReference>
<dbReference type="PANTHER" id="PTHR24028:SF46">
    <property type="entry name" value="PROTOCADHERIN-8"/>
    <property type="match status" value="1"/>
</dbReference>
<dbReference type="Pfam" id="PF00028">
    <property type="entry name" value="Cadherin"/>
    <property type="match status" value="5"/>
</dbReference>
<dbReference type="Pfam" id="PF08266">
    <property type="entry name" value="Cadherin_2"/>
    <property type="match status" value="1"/>
</dbReference>
<dbReference type="PRINTS" id="PR00205">
    <property type="entry name" value="CADHERIN"/>
</dbReference>
<dbReference type="SMART" id="SM00112">
    <property type="entry name" value="CA"/>
    <property type="match status" value="6"/>
</dbReference>
<dbReference type="SUPFAM" id="SSF49313">
    <property type="entry name" value="Cadherin-like"/>
    <property type="match status" value="6"/>
</dbReference>
<dbReference type="PROSITE" id="PS00232">
    <property type="entry name" value="CADHERIN_1"/>
    <property type="match status" value="5"/>
</dbReference>
<dbReference type="PROSITE" id="PS50268">
    <property type="entry name" value="CADHERIN_2"/>
    <property type="match status" value="6"/>
</dbReference>
<organism>
    <name type="scientific">Rattus norvegicus</name>
    <name type="common">Rat</name>
    <dbReference type="NCBI Taxonomy" id="10116"/>
    <lineage>
        <taxon>Eukaryota</taxon>
        <taxon>Metazoa</taxon>
        <taxon>Chordata</taxon>
        <taxon>Craniata</taxon>
        <taxon>Vertebrata</taxon>
        <taxon>Euteleostomi</taxon>
        <taxon>Mammalia</taxon>
        <taxon>Eutheria</taxon>
        <taxon>Euarchontoglires</taxon>
        <taxon>Glires</taxon>
        <taxon>Rodentia</taxon>
        <taxon>Myomorpha</taxon>
        <taxon>Muroidea</taxon>
        <taxon>Muridae</taxon>
        <taxon>Murinae</taxon>
        <taxon>Rattus</taxon>
    </lineage>
</organism>
<reference key="1">
    <citation type="journal article" date="1999" name="J. Biol. Chem.">
        <title>Arcadlin is a neural activity-regulated cadherin involved in long term potentiation.</title>
        <authorList>
            <person name="Yamagata K."/>
            <person name="Andreasson K.I."/>
            <person name="Sugiura H."/>
            <person name="Maru E."/>
            <person name="Dominique M."/>
            <person name="Irie Y."/>
            <person name="Miki N."/>
            <person name="Hayashi Y."/>
            <person name="Yoshioka M."/>
            <person name="Kaneko K."/>
            <person name="Kato H."/>
            <person name="Worley P.F."/>
        </authorList>
    </citation>
    <scope>NUCLEOTIDE SEQUENCE [MRNA] (ISOFORM 2)</scope>
    <scope>FUNCTION</scope>
    <scope>SUBUNIT</scope>
    <scope>SUBCELLULAR LOCATION</scope>
    <scope>TISSUE SPECIFICITY</scope>
    <scope>DEVELOPMENTAL STAGE</scope>
    <scope>INDUCTION</scope>
    <source>
        <tissue>Hippocampus</tissue>
    </source>
</reference>
<reference key="2">
    <citation type="journal article" date="2004" name="Nature">
        <title>Genome sequence of the Brown Norway rat yields insights into mammalian evolution.</title>
        <authorList>
            <person name="Gibbs R.A."/>
            <person name="Weinstock G.M."/>
            <person name="Metzker M.L."/>
            <person name="Muzny D.M."/>
            <person name="Sodergren E.J."/>
            <person name="Scherer S."/>
            <person name="Scott G."/>
            <person name="Steffen D."/>
            <person name="Worley K.C."/>
            <person name="Burch P.E."/>
            <person name="Okwuonu G."/>
            <person name="Hines S."/>
            <person name="Lewis L."/>
            <person name="Deramo C."/>
            <person name="Delgado O."/>
            <person name="Dugan-Rocha S."/>
            <person name="Miner G."/>
            <person name="Morgan M."/>
            <person name="Hawes A."/>
            <person name="Gill R."/>
            <person name="Holt R.A."/>
            <person name="Adams M.D."/>
            <person name="Amanatides P.G."/>
            <person name="Baden-Tillson H."/>
            <person name="Barnstead M."/>
            <person name="Chin S."/>
            <person name="Evans C.A."/>
            <person name="Ferriera S."/>
            <person name="Fosler C."/>
            <person name="Glodek A."/>
            <person name="Gu Z."/>
            <person name="Jennings D."/>
            <person name="Kraft C.L."/>
            <person name="Nguyen T."/>
            <person name="Pfannkoch C.M."/>
            <person name="Sitter C."/>
            <person name="Sutton G.G."/>
            <person name="Venter J.C."/>
            <person name="Woodage T."/>
            <person name="Smith D."/>
            <person name="Lee H.-M."/>
            <person name="Gustafson E."/>
            <person name="Cahill P."/>
            <person name="Kana A."/>
            <person name="Doucette-Stamm L."/>
            <person name="Weinstock K."/>
            <person name="Fechtel K."/>
            <person name="Weiss R.B."/>
            <person name="Dunn D.M."/>
            <person name="Green E.D."/>
            <person name="Blakesley R.W."/>
            <person name="Bouffard G.G."/>
            <person name="De Jong P.J."/>
            <person name="Osoegawa K."/>
            <person name="Zhu B."/>
            <person name="Marra M."/>
            <person name="Schein J."/>
            <person name="Bosdet I."/>
            <person name="Fjell C."/>
            <person name="Jones S."/>
            <person name="Krzywinski M."/>
            <person name="Mathewson C."/>
            <person name="Siddiqui A."/>
            <person name="Wye N."/>
            <person name="McPherson J."/>
            <person name="Zhao S."/>
            <person name="Fraser C.M."/>
            <person name="Shetty J."/>
            <person name="Shatsman S."/>
            <person name="Geer K."/>
            <person name="Chen Y."/>
            <person name="Abramzon S."/>
            <person name="Nierman W.C."/>
            <person name="Havlak P.H."/>
            <person name="Chen R."/>
            <person name="Durbin K.J."/>
            <person name="Egan A."/>
            <person name="Ren Y."/>
            <person name="Song X.-Z."/>
            <person name="Li B."/>
            <person name="Liu Y."/>
            <person name="Qin X."/>
            <person name="Cawley S."/>
            <person name="Cooney A.J."/>
            <person name="D'Souza L.M."/>
            <person name="Martin K."/>
            <person name="Wu J.Q."/>
            <person name="Gonzalez-Garay M.L."/>
            <person name="Jackson A.R."/>
            <person name="Kalafus K.J."/>
            <person name="McLeod M.P."/>
            <person name="Milosavljevic A."/>
            <person name="Virk D."/>
            <person name="Volkov A."/>
            <person name="Wheeler D.A."/>
            <person name="Zhang Z."/>
            <person name="Bailey J.A."/>
            <person name="Eichler E.E."/>
            <person name="Tuzun E."/>
            <person name="Birney E."/>
            <person name="Mongin E."/>
            <person name="Ureta-Vidal A."/>
            <person name="Woodwark C."/>
            <person name="Zdobnov E."/>
            <person name="Bork P."/>
            <person name="Suyama M."/>
            <person name="Torrents D."/>
            <person name="Alexandersson M."/>
            <person name="Trask B.J."/>
            <person name="Young J.M."/>
            <person name="Huang H."/>
            <person name="Wang H."/>
            <person name="Xing H."/>
            <person name="Daniels S."/>
            <person name="Gietzen D."/>
            <person name="Schmidt J."/>
            <person name="Stevens K."/>
            <person name="Vitt U."/>
            <person name="Wingrove J."/>
            <person name="Camara F."/>
            <person name="Mar Alba M."/>
            <person name="Abril J.F."/>
            <person name="Guigo R."/>
            <person name="Smit A."/>
            <person name="Dubchak I."/>
            <person name="Rubin E.M."/>
            <person name="Couronne O."/>
            <person name="Poliakov A."/>
            <person name="Huebner N."/>
            <person name="Ganten D."/>
            <person name="Goesele C."/>
            <person name="Hummel O."/>
            <person name="Kreitler T."/>
            <person name="Lee Y.-A."/>
            <person name="Monti J."/>
            <person name="Schulz H."/>
            <person name="Zimdahl H."/>
            <person name="Himmelbauer H."/>
            <person name="Lehrach H."/>
            <person name="Jacob H.J."/>
            <person name="Bromberg S."/>
            <person name="Gullings-Handley J."/>
            <person name="Jensen-Seaman M.I."/>
            <person name="Kwitek A.E."/>
            <person name="Lazar J."/>
            <person name="Pasko D."/>
            <person name="Tonellato P.J."/>
            <person name="Twigger S."/>
            <person name="Ponting C.P."/>
            <person name="Duarte J.M."/>
            <person name="Rice S."/>
            <person name="Goodstadt L."/>
            <person name="Beatson S.A."/>
            <person name="Emes R.D."/>
            <person name="Winter E.E."/>
            <person name="Webber C."/>
            <person name="Brandt P."/>
            <person name="Nyakatura G."/>
            <person name="Adetobi M."/>
            <person name="Chiaromonte F."/>
            <person name="Elnitski L."/>
            <person name="Eswara P."/>
            <person name="Hardison R.C."/>
            <person name="Hou M."/>
            <person name="Kolbe D."/>
            <person name="Makova K."/>
            <person name="Miller W."/>
            <person name="Nekrutenko A."/>
            <person name="Riemer C."/>
            <person name="Schwartz S."/>
            <person name="Taylor J."/>
            <person name="Yang S."/>
            <person name="Zhang Y."/>
            <person name="Lindpaintner K."/>
            <person name="Andrews T.D."/>
            <person name="Caccamo M."/>
            <person name="Clamp M."/>
            <person name="Clarke L."/>
            <person name="Curwen V."/>
            <person name="Durbin R.M."/>
            <person name="Eyras E."/>
            <person name="Searle S.M."/>
            <person name="Cooper G.M."/>
            <person name="Batzoglou S."/>
            <person name="Brudno M."/>
            <person name="Sidow A."/>
            <person name="Stone E.A."/>
            <person name="Payseur B.A."/>
            <person name="Bourque G."/>
            <person name="Lopez-Otin C."/>
            <person name="Puente X.S."/>
            <person name="Chakrabarti K."/>
            <person name="Chatterji S."/>
            <person name="Dewey C."/>
            <person name="Pachter L."/>
            <person name="Bray N."/>
            <person name="Yap V.B."/>
            <person name="Caspi A."/>
            <person name="Tesler G."/>
            <person name="Pevzner P.A."/>
            <person name="Haussler D."/>
            <person name="Roskin K.M."/>
            <person name="Baertsch R."/>
            <person name="Clawson H."/>
            <person name="Furey T.S."/>
            <person name="Hinrichs A.S."/>
            <person name="Karolchik D."/>
            <person name="Kent W.J."/>
            <person name="Rosenbloom K.R."/>
            <person name="Trumbower H."/>
            <person name="Weirauch M."/>
            <person name="Cooper D.N."/>
            <person name="Stenson P.D."/>
            <person name="Ma B."/>
            <person name="Brent M."/>
            <person name="Arumugam M."/>
            <person name="Shteynberg D."/>
            <person name="Copley R.R."/>
            <person name="Taylor M.S."/>
            <person name="Riethman H."/>
            <person name="Mudunuri U."/>
            <person name="Peterson J."/>
            <person name="Guyer M."/>
            <person name="Felsenfeld A."/>
            <person name="Old S."/>
            <person name="Mockrin S."/>
            <person name="Collins F.S."/>
        </authorList>
    </citation>
    <scope>NUCLEOTIDE SEQUENCE [LARGE SCALE GENOMIC DNA]</scope>
    <source>
        <strain>Brown Norway</strain>
    </source>
</reference>
<reference key="3">
    <citation type="journal article" date="2004" name="Genome Res.">
        <title>The status, quality, and expansion of the NIH full-length cDNA project: the Mammalian Gene Collection (MGC).</title>
        <authorList>
            <consortium name="The MGC Project Team"/>
        </authorList>
    </citation>
    <scope>NUCLEOTIDE SEQUENCE [LARGE SCALE MRNA] OF 1-694</scope>
    <source>
        <strain>Brown Norway/NHsdMcwi</strain>
        <tissue>Embryonic brain</tissue>
    </source>
</reference>
<reference key="4">
    <citation type="journal article" date="2007" name="Neuron">
        <title>Activity-induced protocadherin arcadlin regulates dendritic spine number by triggering N-cadherin endocytosis via TAO2beta and p38 MAP kinases.</title>
        <authorList>
            <person name="Yasuda S."/>
            <person name="Tanaka H."/>
            <person name="Sugiura H."/>
            <person name="Okamura K."/>
            <person name="Sakaguchi T."/>
            <person name="Tran U."/>
            <person name="Takemiya T."/>
            <person name="Mizoguchi A."/>
            <person name="Yagita Y."/>
            <person name="Sakurai T."/>
            <person name="De Robertis E.M."/>
            <person name="Yamagata K."/>
        </authorList>
    </citation>
    <scope>FUNCTION</scope>
    <scope>INTERACTION WITH CDH2; CDH11 AND TAOK2</scope>
    <scope>INDUCTION</scope>
</reference>
<reference key="5">
    <citation type="journal article" date="2012" name="Nat. Commun.">
        <title>Quantitative maps of protein phosphorylation sites across 14 different rat organs and tissues.</title>
        <authorList>
            <person name="Lundby A."/>
            <person name="Secher A."/>
            <person name="Lage K."/>
            <person name="Nordsborg N.B."/>
            <person name="Dmytriyev A."/>
            <person name="Lundby C."/>
            <person name="Olsen J.V."/>
        </authorList>
    </citation>
    <scope>PHOSPHORYLATION [LARGE SCALE ANALYSIS] AT SER-1052</scope>
    <scope>IDENTIFICATION BY MASS SPECTROMETRY [LARGE SCALE ANALYSIS]</scope>
</reference>
<name>PCDH8_RAT</name>
<comment type="function">
    <text evidence="5 6">Calcium-dependent cell-adhesion protein. May play a role in activity-induced synaptic reorganization underlying long term memory. Could be involved in CDH2 internalization through TAOK2/p38 MAPK pathway. In hippocampal neurons, may play a role in the down-regulation of dendritic spines, maybe through its action on CDH2 endocytosis.</text>
</comment>
<comment type="subunit">
    <text evidence="5 6">The N-terminal extracellular domain forms homophilic interactions; these interactions activate p38 MAPK via TAOK2 and trigger endocytosis. Interacts with CDH2; this interaction may lead to CDH2 cointernalization. Interacts with CDH11. Interacts with TAOK2.</text>
</comment>
<comment type="subcellular location">
    <subcellularLocation>
        <location evidence="1">Cell membrane</location>
        <topology evidence="1">Single-pass type I membrane protein</topology>
    </subcellularLocation>
    <subcellularLocation>
        <location evidence="5">Cell projection</location>
        <location evidence="5">Dendrite</location>
    </subcellularLocation>
    <subcellularLocation>
        <location evidence="5">Presynaptic cell membrane</location>
    </subcellularLocation>
    <subcellularLocation>
        <location evidence="5">Postsynaptic cell membrane</location>
    </subcellularLocation>
    <text>Also expressed in the cell bodies of neurons of the hippocampus and cortex. Localized to excitatory, but not with inhibitory, synapses.</text>
</comment>
<comment type="alternative products">
    <event type="alternative splicing"/>
    <isoform>
        <id>D3ZE55-1</id>
        <name>1</name>
        <sequence type="displayed"/>
    </isoform>
    <isoform>
        <id>D3ZE55-2</id>
        <name>2</name>
        <sequence type="described" ref="VSP_040565"/>
    </isoform>
</comment>
<comment type="tissue specificity">
    <text evidence="5">Enriched in brain relative to peripheral tissues, with low expression in the testis. Expressed in hippocampal neurons (at protein level).</text>
</comment>
<comment type="developmental stage">
    <text evidence="5">At 17 dpc, expressed in the auditory circuit, most prominently in the inferior colliculus, and later in the medial geniculate and the auditory cortex at P0. At P0, also expressed in targets of retinal projections, such as the superior colliculus, the suprachiasmatic nucleus, and the ventrolateral geniculate nucleus. At the same stage, detected in selected structures of the limbic circuit, including the anterior limbic thalamic nuclei, the hippocampus, amygdala and habenula.</text>
</comment>
<comment type="induction">
    <text evidence="5 6">Rapidly and transiently induced by maximal electroconvulsive seizure in the hippocampal granule cells, and modestly induced in the pyramidal cells. Also induced by cAMP.</text>
</comment>
<comment type="miscellaneous">
    <molecule>Isoform 2</molecule>
    <text evidence="9">May be the only physiologically relevant isoform.</text>
</comment>
<protein>
    <recommendedName>
        <fullName>Protocadherin-8</fullName>
    </recommendedName>
    <alternativeName>
        <fullName>Activity-regulated cadherin-like protein</fullName>
        <shortName>Arcadlin</shortName>
    </alternativeName>
</protein>
<feature type="signal peptide" evidence="2">
    <location>
        <begin position="1"/>
        <end position="29"/>
    </location>
</feature>
<feature type="chain" id="PRO_0000404297" description="Protocadherin-8">
    <location>
        <begin position="30"/>
        <end position="1069"/>
    </location>
</feature>
<feature type="topological domain" description="Extracellular" evidence="2">
    <location>
        <begin position="30"/>
        <end position="747"/>
    </location>
</feature>
<feature type="transmembrane region" description="Helical" evidence="2">
    <location>
        <begin position="748"/>
        <end position="768"/>
    </location>
</feature>
<feature type="topological domain" description="Cytoplasmic" evidence="2">
    <location>
        <begin position="769"/>
        <end position="1069"/>
    </location>
</feature>
<feature type="domain" description="Cadherin 1" evidence="3">
    <location>
        <begin position="30"/>
        <end position="135"/>
    </location>
</feature>
<feature type="domain" description="Cadherin 2" evidence="3">
    <location>
        <begin position="136"/>
        <end position="245"/>
    </location>
</feature>
<feature type="domain" description="Cadherin 3" evidence="3">
    <location>
        <begin position="247"/>
        <end position="354"/>
    </location>
</feature>
<feature type="domain" description="Cadherin 4" evidence="3">
    <location>
        <begin position="393"/>
        <end position="497"/>
    </location>
</feature>
<feature type="domain" description="Cadherin 5" evidence="3">
    <location>
        <begin position="498"/>
        <end position="609"/>
    </location>
</feature>
<feature type="domain" description="Cadherin 6" evidence="3">
    <location>
        <begin position="615"/>
        <end position="721"/>
    </location>
</feature>
<feature type="region of interest" description="Disordered" evidence="4">
    <location>
        <begin position="719"/>
        <end position="738"/>
    </location>
</feature>
<feature type="region of interest" description="Disordered" evidence="4">
    <location>
        <begin position="777"/>
        <end position="859"/>
    </location>
</feature>
<feature type="region of interest" description="Disordered" evidence="4">
    <location>
        <begin position="905"/>
        <end position="927"/>
    </location>
</feature>
<feature type="region of interest" description="Disordered" evidence="4">
    <location>
        <begin position="1031"/>
        <end position="1069"/>
    </location>
</feature>
<feature type="compositionally biased region" description="Basic and acidic residues" evidence="4">
    <location>
        <begin position="780"/>
        <end position="790"/>
    </location>
</feature>
<feature type="compositionally biased region" description="Basic and acidic residues" evidence="4">
    <location>
        <begin position="905"/>
        <end position="920"/>
    </location>
</feature>
<feature type="modified residue" description="Phosphoserine" evidence="10">
    <location>
        <position position="1052"/>
    </location>
</feature>
<feature type="glycosylation site" description="N-linked (GlcNAc...) asparagine" evidence="2">
    <location>
        <position position="616"/>
    </location>
</feature>
<feature type="splice variant" id="VSP_040565" description="In isoform 2." evidence="7">
    <location>
        <begin position="779"/>
        <end position="875"/>
    </location>
</feature>
<feature type="sequence conflict" description="In Ref. 1; BAA82442." evidence="8" ref="1">
    <original>A</original>
    <variation>P</variation>
    <location>
        <position position="351"/>
    </location>
</feature>
<sequence length="1069" mass="113191">MSPVKRWGSPCLFPLQLFSLCWVLSVAQSKTVRYSTFEEDAPGTVIGTLAEDLHMKVSGDTSFRLMKQFNSSLLRVREGDGQLTVGDAGLDRERLCGQSPQCVLAFDVVSFSQEQFRLVHVEVEVRDVNDHAPRFPRAQIPVEVSESAPVGTRIPLEVPVDEDVGANGLQSVRLAEPHSPFRVELQTRADGAQCADLVLLQELDRESQASYSLELVAQDGGRPPRSATAALSVRVLDANDHSPAFPQGAVAEVELAEDAPVGSLLLDLDAADPDEGPNGDVVFTFGARTPPEARHLFRLDPRSGRLTLAGQVDYERQDTYELDVRAQDRGPGPRTATCKVIVRIRDVNDNAPDISITPLAAPGAPATSPFAAAAAAAALGGADAASSAGSGTQETGVTSLVPEGAARESLVALVSTSDRDSGANGQVRCALYGHEHFRLQPAYAGSYLVVTAASLDRERIAEYNLTLVAEDRGAPPLRTVRPYTVRVGDENDNAPLFTKPVYEVSVRENNPPGAYLATVAARDPDLGRNGQVTYRLVEAEVGRSGEAVSTYVSVDPATGAIYALRSFDYETLRQLDVRVQASDGGSPQLSSNALVQVRVLDQNDHSPVLVHPAPANGSLEVAVPGRSTKDTAVARIQARDADEGANGELAFDLLQQEPREAFSIGRHTGEIVLTGDLSQEPPGRVFKALLVISDGGRPPLTTTATVSFVVTAGGGSAVPASAGSPEHFRPPGSRLAPSGPSLQWDTPLIVIIVLAGSCTLLLAAIIAIATTCNRRKKEVRKGGALREERPGAAGGGASAPGSPDETARGTGPRPNMFDVLTFPGSGKAPFGSPAADAPPPAVAAAEVPGSEGGSATGESACHFEGQQRLRGAHAEPYSASPGFGKEPAPPVAVWKGHSFNTISGREAEKFSGKDSGKGDSDFNDSDSDISGDALKKDLINHMQSGLWACTAECKILGHSDRCWSPSCAGPNTHPPPHPPAQMSTFCKSTSLPRDPLRRDNYYQAQLPKTVGLQSVYEKVLHRDYDRTVTLLSPPRPGRLPDLQEIGVPLYESPPGGRYVSPKKGTNENV</sequence>
<proteinExistence type="evidence at protein level"/>
<evidence type="ECO:0000250" key="1"/>
<evidence type="ECO:0000255" key="2"/>
<evidence type="ECO:0000255" key="3">
    <source>
        <dbReference type="PROSITE-ProRule" id="PRU00043"/>
    </source>
</evidence>
<evidence type="ECO:0000256" key="4">
    <source>
        <dbReference type="SAM" id="MobiDB-lite"/>
    </source>
</evidence>
<evidence type="ECO:0000269" key="5">
    <source>
    </source>
</evidence>
<evidence type="ECO:0000269" key="6">
    <source>
    </source>
</evidence>
<evidence type="ECO:0000303" key="7">
    <source>
    </source>
</evidence>
<evidence type="ECO:0000305" key="8"/>
<evidence type="ECO:0000305" key="9">
    <source>
    </source>
</evidence>
<evidence type="ECO:0007744" key="10">
    <source>
    </source>
</evidence>
<gene>
    <name type="primary">Pcdh8</name>
</gene>
<accession>D3ZE55</accession>
<accession>A1A5N4</accession>
<accession>Q9WVR2</accession>
<keyword id="KW-0025">Alternative splicing</keyword>
<keyword id="KW-0106">Calcium</keyword>
<keyword id="KW-0130">Cell adhesion</keyword>
<keyword id="KW-1003">Cell membrane</keyword>
<keyword id="KW-0966">Cell projection</keyword>
<keyword id="KW-0325">Glycoprotein</keyword>
<keyword id="KW-0472">Membrane</keyword>
<keyword id="KW-0597">Phosphoprotein</keyword>
<keyword id="KW-0628">Postsynaptic cell membrane</keyword>
<keyword id="KW-1185">Reference proteome</keyword>
<keyword id="KW-0677">Repeat</keyword>
<keyword id="KW-0732">Signal</keyword>
<keyword id="KW-0770">Synapse</keyword>
<keyword id="KW-0812">Transmembrane</keyword>
<keyword id="KW-1133">Transmembrane helix</keyword>